<dbReference type="EMBL" id="CP000686">
    <property type="protein sequence ID" value="ABQ89589.1"/>
    <property type="molecule type" value="Genomic_DNA"/>
</dbReference>
<dbReference type="RefSeq" id="WP_011955942.1">
    <property type="nucleotide sequence ID" value="NC_009523.1"/>
</dbReference>
<dbReference type="SMR" id="A5USI6"/>
<dbReference type="STRING" id="357808.RoseRS_1182"/>
<dbReference type="KEGG" id="rrs:RoseRS_1182"/>
<dbReference type="eggNOG" id="COG0090">
    <property type="taxonomic scope" value="Bacteria"/>
</dbReference>
<dbReference type="HOGENOM" id="CLU_036235_2_1_0"/>
<dbReference type="OrthoDB" id="9778722at2"/>
<dbReference type="Proteomes" id="UP000006554">
    <property type="component" value="Chromosome"/>
</dbReference>
<dbReference type="GO" id="GO:0015934">
    <property type="term" value="C:large ribosomal subunit"/>
    <property type="evidence" value="ECO:0007669"/>
    <property type="project" value="InterPro"/>
</dbReference>
<dbReference type="GO" id="GO:0019843">
    <property type="term" value="F:rRNA binding"/>
    <property type="evidence" value="ECO:0007669"/>
    <property type="project" value="UniProtKB-UniRule"/>
</dbReference>
<dbReference type="GO" id="GO:0003735">
    <property type="term" value="F:structural constituent of ribosome"/>
    <property type="evidence" value="ECO:0007669"/>
    <property type="project" value="InterPro"/>
</dbReference>
<dbReference type="GO" id="GO:0016740">
    <property type="term" value="F:transferase activity"/>
    <property type="evidence" value="ECO:0007669"/>
    <property type="project" value="InterPro"/>
</dbReference>
<dbReference type="GO" id="GO:0002181">
    <property type="term" value="P:cytoplasmic translation"/>
    <property type="evidence" value="ECO:0007669"/>
    <property type="project" value="TreeGrafter"/>
</dbReference>
<dbReference type="FunFam" id="2.30.30.30:FF:000001">
    <property type="entry name" value="50S ribosomal protein L2"/>
    <property type="match status" value="1"/>
</dbReference>
<dbReference type="FunFam" id="2.40.50.140:FF:000003">
    <property type="entry name" value="50S ribosomal protein L2"/>
    <property type="match status" value="1"/>
</dbReference>
<dbReference type="FunFam" id="4.10.950.10:FF:000001">
    <property type="entry name" value="50S ribosomal protein L2"/>
    <property type="match status" value="1"/>
</dbReference>
<dbReference type="Gene3D" id="2.30.30.30">
    <property type="match status" value="1"/>
</dbReference>
<dbReference type="Gene3D" id="2.40.50.140">
    <property type="entry name" value="Nucleic acid-binding proteins"/>
    <property type="match status" value="1"/>
</dbReference>
<dbReference type="Gene3D" id="4.10.950.10">
    <property type="entry name" value="Ribosomal protein L2, domain 3"/>
    <property type="match status" value="1"/>
</dbReference>
<dbReference type="HAMAP" id="MF_01320_B">
    <property type="entry name" value="Ribosomal_uL2_B"/>
    <property type="match status" value="1"/>
</dbReference>
<dbReference type="InterPro" id="IPR012340">
    <property type="entry name" value="NA-bd_OB-fold"/>
</dbReference>
<dbReference type="InterPro" id="IPR014722">
    <property type="entry name" value="Rib_uL2_dom2"/>
</dbReference>
<dbReference type="InterPro" id="IPR002171">
    <property type="entry name" value="Ribosomal_uL2"/>
</dbReference>
<dbReference type="InterPro" id="IPR005880">
    <property type="entry name" value="Ribosomal_uL2_bac/org-type"/>
</dbReference>
<dbReference type="InterPro" id="IPR022669">
    <property type="entry name" value="Ribosomal_uL2_C"/>
</dbReference>
<dbReference type="InterPro" id="IPR022671">
    <property type="entry name" value="Ribosomal_uL2_CS"/>
</dbReference>
<dbReference type="InterPro" id="IPR014726">
    <property type="entry name" value="Ribosomal_uL2_dom3"/>
</dbReference>
<dbReference type="InterPro" id="IPR022666">
    <property type="entry name" value="Ribosomal_uL2_RNA-bd_dom"/>
</dbReference>
<dbReference type="InterPro" id="IPR008991">
    <property type="entry name" value="Translation_prot_SH3-like_sf"/>
</dbReference>
<dbReference type="NCBIfam" id="TIGR01171">
    <property type="entry name" value="rplB_bact"/>
    <property type="match status" value="1"/>
</dbReference>
<dbReference type="PANTHER" id="PTHR13691:SF5">
    <property type="entry name" value="LARGE RIBOSOMAL SUBUNIT PROTEIN UL2M"/>
    <property type="match status" value="1"/>
</dbReference>
<dbReference type="PANTHER" id="PTHR13691">
    <property type="entry name" value="RIBOSOMAL PROTEIN L2"/>
    <property type="match status" value="1"/>
</dbReference>
<dbReference type="Pfam" id="PF00181">
    <property type="entry name" value="Ribosomal_L2"/>
    <property type="match status" value="1"/>
</dbReference>
<dbReference type="Pfam" id="PF03947">
    <property type="entry name" value="Ribosomal_L2_C"/>
    <property type="match status" value="1"/>
</dbReference>
<dbReference type="PIRSF" id="PIRSF002158">
    <property type="entry name" value="Ribosomal_L2"/>
    <property type="match status" value="1"/>
</dbReference>
<dbReference type="SMART" id="SM01383">
    <property type="entry name" value="Ribosomal_L2"/>
    <property type="match status" value="1"/>
</dbReference>
<dbReference type="SMART" id="SM01382">
    <property type="entry name" value="Ribosomal_L2_C"/>
    <property type="match status" value="1"/>
</dbReference>
<dbReference type="SUPFAM" id="SSF50249">
    <property type="entry name" value="Nucleic acid-binding proteins"/>
    <property type="match status" value="1"/>
</dbReference>
<dbReference type="SUPFAM" id="SSF50104">
    <property type="entry name" value="Translation proteins SH3-like domain"/>
    <property type="match status" value="1"/>
</dbReference>
<dbReference type="PROSITE" id="PS00467">
    <property type="entry name" value="RIBOSOMAL_L2"/>
    <property type="match status" value="1"/>
</dbReference>
<keyword id="KW-0687">Ribonucleoprotein</keyword>
<keyword id="KW-0689">Ribosomal protein</keyword>
<keyword id="KW-0694">RNA-binding</keyword>
<keyword id="KW-0699">rRNA-binding</keyword>
<reference key="1">
    <citation type="submission" date="2007-04" db="EMBL/GenBank/DDBJ databases">
        <title>Complete sequence of Roseiflexus sp. RS-1.</title>
        <authorList>
            <consortium name="US DOE Joint Genome Institute"/>
            <person name="Copeland A."/>
            <person name="Lucas S."/>
            <person name="Lapidus A."/>
            <person name="Barry K."/>
            <person name="Detter J.C."/>
            <person name="Glavina del Rio T."/>
            <person name="Hammon N."/>
            <person name="Israni S."/>
            <person name="Dalin E."/>
            <person name="Tice H."/>
            <person name="Pitluck S."/>
            <person name="Chertkov O."/>
            <person name="Brettin T."/>
            <person name="Bruce D."/>
            <person name="Han C."/>
            <person name="Schmutz J."/>
            <person name="Larimer F."/>
            <person name="Land M."/>
            <person name="Hauser L."/>
            <person name="Kyrpides N."/>
            <person name="Mikhailova N."/>
            <person name="Bryant D.A."/>
            <person name="Richardson P."/>
        </authorList>
    </citation>
    <scope>NUCLEOTIDE SEQUENCE [LARGE SCALE GENOMIC DNA]</scope>
    <source>
        <strain>RS-1</strain>
    </source>
</reference>
<organism>
    <name type="scientific">Roseiflexus sp. (strain RS-1)</name>
    <dbReference type="NCBI Taxonomy" id="357808"/>
    <lineage>
        <taxon>Bacteria</taxon>
        <taxon>Bacillati</taxon>
        <taxon>Chloroflexota</taxon>
        <taxon>Chloroflexia</taxon>
        <taxon>Chloroflexales</taxon>
        <taxon>Roseiflexineae</taxon>
        <taxon>Roseiflexaceae</taxon>
        <taxon>Roseiflexus</taxon>
    </lineage>
</organism>
<sequence length="275" mass="30768">MPVKKYKPTSPGRRNMSVSTFEEITKKEPERSLLEPLRKKAGRNNYGRITVRHRGGGHKRHYRRIDFKRDKIGVPAKVAAIEYDPNRSARIALLHYVDGEKRYILAPLGLNVGDTVMSGPDADIRVGNALPLRQIPLGTQVHNVELEKGRGGVMVRSAGAAAQLMAKEGNYATLRMPSGEVRRVFIECMATIGQVGNLDHQNIRLGKAGRKRWLGRRPEVRGAAMNPRDHPHGGGEGRAPRGMPTPKTKWGKPARGVKTRHNPRTDPFIIRRRTR</sequence>
<evidence type="ECO:0000255" key="1">
    <source>
        <dbReference type="HAMAP-Rule" id="MF_01320"/>
    </source>
</evidence>
<evidence type="ECO:0000256" key="2">
    <source>
        <dbReference type="SAM" id="MobiDB-lite"/>
    </source>
</evidence>
<evidence type="ECO:0000305" key="3"/>
<proteinExistence type="inferred from homology"/>
<name>RL2_ROSS1</name>
<comment type="function">
    <text evidence="1">One of the primary rRNA binding proteins. Required for association of the 30S and 50S subunits to form the 70S ribosome, for tRNA binding and peptide bond formation. It has been suggested to have peptidyltransferase activity; this is somewhat controversial. Makes several contacts with the 16S rRNA in the 70S ribosome.</text>
</comment>
<comment type="subunit">
    <text evidence="1">Part of the 50S ribosomal subunit. Forms a bridge to the 30S subunit in the 70S ribosome.</text>
</comment>
<comment type="similarity">
    <text evidence="1">Belongs to the universal ribosomal protein uL2 family.</text>
</comment>
<protein>
    <recommendedName>
        <fullName evidence="1">Large ribosomal subunit protein uL2</fullName>
    </recommendedName>
    <alternativeName>
        <fullName evidence="3">50S ribosomal protein L2</fullName>
    </alternativeName>
</protein>
<accession>A5USI6</accession>
<gene>
    <name evidence="1" type="primary">rplB</name>
    <name type="ordered locus">RoseRS_1182</name>
</gene>
<feature type="chain" id="PRO_1000051949" description="Large ribosomal subunit protein uL2">
    <location>
        <begin position="1"/>
        <end position="275"/>
    </location>
</feature>
<feature type="region of interest" description="Disordered" evidence="2">
    <location>
        <begin position="220"/>
        <end position="275"/>
    </location>
</feature>
<feature type="compositionally biased region" description="Basic and acidic residues" evidence="2">
    <location>
        <begin position="227"/>
        <end position="239"/>
    </location>
</feature>
<feature type="compositionally biased region" description="Basic residues" evidence="2">
    <location>
        <begin position="249"/>
        <end position="262"/>
    </location>
</feature>